<protein>
    <recommendedName>
        <fullName evidence="1">3-isopropylmalate dehydratase large subunit 2</fullName>
        <ecNumber evidence="1">4.2.1.33</ecNumber>
    </recommendedName>
    <alternativeName>
        <fullName evidence="1">Alpha-IPM isomerase 2</fullName>
        <shortName evidence="1">IPMI 2</shortName>
    </alternativeName>
    <alternativeName>
        <fullName evidence="1">Isopropylmalate isomerase 2</fullName>
    </alternativeName>
</protein>
<gene>
    <name evidence="1" type="primary">leuC2</name>
    <name type="ordered locus">SCH_0374</name>
</gene>
<dbReference type="EC" id="4.2.1.33" evidence="1"/>
<dbReference type="EMBL" id="AE017220">
    <property type="protein sequence ID" value="AAX64280.1"/>
    <property type="molecule type" value="Genomic_DNA"/>
</dbReference>
<dbReference type="SMR" id="Q57SN1"/>
<dbReference type="KEGG" id="sec:SCH_0374"/>
<dbReference type="HOGENOM" id="CLU_006714_3_4_6"/>
<dbReference type="UniPathway" id="UPA00048">
    <property type="reaction ID" value="UER00071"/>
</dbReference>
<dbReference type="Proteomes" id="UP000000538">
    <property type="component" value="Chromosome"/>
</dbReference>
<dbReference type="GO" id="GO:0003861">
    <property type="term" value="F:3-isopropylmalate dehydratase activity"/>
    <property type="evidence" value="ECO:0007669"/>
    <property type="project" value="UniProtKB-UniRule"/>
</dbReference>
<dbReference type="GO" id="GO:0051539">
    <property type="term" value="F:4 iron, 4 sulfur cluster binding"/>
    <property type="evidence" value="ECO:0007669"/>
    <property type="project" value="UniProtKB-KW"/>
</dbReference>
<dbReference type="GO" id="GO:0046872">
    <property type="term" value="F:metal ion binding"/>
    <property type="evidence" value="ECO:0007669"/>
    <property type="project" value="UniProtKB-KW"/>
</dbReference>
<dbReference type="GO" id="GO:0009098">
    <property type="term" value="P:L-leucine biosynthetic process"/>
    <property type="evidence" value="ECO:0007669"/>
    <property type="project" value="UniProtKB-UniRule"/>
</dbReference>
<dbReference type="CDD" id="cd01583">
    <property type="entry name" value="IPMI"/>
    <property type="match status" value="1"/>
</dbReference>
<dbReference type="FunFam" id="3.30.499.10:FF:000007">
    <property type="entry name" value="3-isopropylmalate dehydratase large subunit"/>
    <property type="match status" value="1"/>
</dbReference>
<dbReference type="Gene3D" id="3.30.499.10">
    <property type="entry name" value="Aconitase, domain 3"/>
    <property type="match status" value="2"/>
</dbReference>
<dbReference type="HAMAP" id="MF_01026">
    <property type="entry name" value="LeuC_type1"/>
    <property type="match status" value="1"/>
</dbReference>
<dbReference type="InterPro" id="IPR004430">
    <property type="entry name" value="3-IsopropMal_deHydase_lsu"/>
</dbReference>
<dbReference type="InterPro" id="IPR015931">
    <property type="entry name" value="Acnase/IPM_dHydase_lsu_aba_1/3"/>
</dbReference>
<dbReference type="InterPro" id="IPR001030">
    <property type="entry name" value="Acoase/IPM_deHydtase_lsu_aba"/>
</dbReference>
<dbReference type="InterPro" id="IPR018136">
    <property type="entry name" value="Aconitase_4Fe-4S_BS"/>
</dbReference>
<dbReference type="InterPro" id="IPR036008">
    <property type="entry name" value="Aconitase_4Fe-4S_dom"/>
</dbReference>
<dbReference type="InterPro" id="IPR050067">
    <property type="entry name" value="IPM_dehydratase_rel_enz"/>
</dbReference>
<dbReference type="InterPro" id="IPR033941">
    <property type="entry name" value="IPMI_cat"/>
</dbReference>
<dbReference type="NCBIfam" id="TIGR00170">
    <property type="entry name" value="leuC"/>
    <property type="match status" value="1"/>
</dbReference>
<dbReference type="NCBIfam" id="NF004016">
    <property type="entry name" value="PRK05478.1"/>
    <property type="match status" value="1"/>
</dbReference>
<dbReference type="NCBIfam" id="NF009116">
    <property type="entry name" value="PRK12466.1"/>
    <property type="match status" value="1"/>
</dbReference>
<dbReference type="PANTHER" id="PTHR43822:SF9">
    <property type="entry name" value="3-ISOPROPYLMALATE DEHYDRATASE"/>
    <property type="match status" value="1"/>
</dbReference>
<dbReference type="PANTHER" id="PTHR43822">
    <property type="entry name" value="HOMOACONITASE, MITOCHONDRIAL-RELATED"/>
    <property type="match status" value="1"/>
</dbReference>
<dbReference type="Pfam" id="PF00330">
    <property type="entry name" value="Aconitase"/>
    <property type="match status" value="1"/>
</dbReference>
<dbReference type="PRINTS" id="PR00415">
    <property type="entry name" value="ACONITASE"/>
</dbReference>
<dbReference type="SUPFAM" id="SSF53732">
    <property type="entry name" value="Aconitase iron-sulfur domain"/>
    <property type="match status" value="1"/>
</dbReference>
<dbReference type="PROSITE" id="PS00450">
    <property type="entry name" value="ACONITASE_1"/>
    <property type="match status" value="1"/>
</dbReference>
<dbReference type="PROSITE" id="PS01244">
    <property type="entry name" value="ACONITASE_2"/>
    <property type="match status" value="1"/>
</dbReference>
<accession>Q57SN1</accession>
<sequence>MSAKTLYEKLVESHTIRELDNEGHVLLYIDRSILNEYTSPQAFSGLRERGRAVRHPDTFLLNIDHVNPTRSQRDVLMTDPGGQLQVDYFRENAADFGITLFDVLDPRQGIEHVVAHEQGLVMPGMVIAAGDSHTTTYGAFGALGFGIGTSEIEHLLATQTLVYRKLKTMRVSVQGELPFACSAKDIVLELLERIGADGATGYAIEFVGEAISALSVEGRMTLCNMAVEAGARGAIIAPDKKVFDYIYGKPQMPVGELWQQALLEWSQLSSDADAVFDKTVAINCHDLEPKVTWGISPDQTGSITGRVPFPEQETNPLKRLALEKALHYMGLTAGMLLKDIRISHAFIGSCTNGRIEDLRAVAKVLEGRKIASHVRGIIVPGSTMVRRQAEEEGLAKIFIAAGFEWRQSGCSMCLAMNEDVLSPGDRCASGTNRNFLGRQGAGARTHLMSPAMVAAAAVAGHLVDVRSLLQAGE</sequence>
<proteinExistence type="inferred from homology"/>
<comment type="function">
    <text evidence="1">Catalyzes the isomerization between 2-isopropylmalate and 3-isopropylmalate, via the formation of 2-isopropylmaleate.</text>
</comment>
<comment type="catalytic activity">
    <reaction evidence="1">
        <text>(2R,3S)-3-isopropylmalate = (2S)-2-isopropylmalate</text>
        <dbReference type="Rhea" id="RHEA:32287"/>
        <dbReference type="ChEBI" id="CHEBI:1178"/>
        <dbReference type="ChEBI" id="CHEBI:35121"/>
        <dbReference type="EC" id="4.2.1.33"/>
    </reaction>
</comment>
<comment type="cofactor">
    <cofactor evidence="1">
        <name>[4Fe-4S] cluster</name>
        <dbReference type="ChEBI" id="CHEBI:49883"/>
    </cofactor>
    <text evidence="1">Binds 1 [4Fe-4S] cluster per subunit.</text>
</comment>
<comment type="pathway">
    <text evidence="1">Amino-acid biosynthesis; L-leucine biosynthesis; L-leucine from 3-methyl-2-oxobutanoate: step 2/4.</text>
</comment>
<comment type="subunit">
    <text evidence="1">Heterodimer of LeuC and LeuD.</text>
</comment>
<comment type="similarity">
    <text evidence="1">Belongs to the aconitase/IPM isomerase family. LeuC type 1 subfamily.</text>
</comment>
<feature type="chain" id="PRO_0000076800" description="3-isopropylmalate dehydratase large subunit 2">
    <location>
        <begin position="1"/>
        <end position="473"/>
    </location>
</feature>
<feature type="binding site" evidence="1">
    <location>
        <position position="350"/>
    </location>
    <ligand>
        <name>[4Fe-4S] cluster</name>
        <dbReference type="ChEBI" id="CHEBI:49883"/>
    </ligand>
</feature>
<feature type="binding site" evidence="1">
    <location>
        <position position="410"/>
    </location>
    <ligand>
        <name>[4Fe-4S] cluster</name>
        <dbReference type="ChEBI" id="CHEBI:49883"/>
    </ligand>
</feature>
<feature type="binding site" evidence="1">
    <location>
        <position position="413"/>
    </location>
    <ligand>
        <name>[4Fe-4S] cluster</name>
        <dbReference type="ChEBI" id="CHEBI:49883"/>
    </ligand>
</feature>
<name>LEUC2_SALCH</name>
<keyword id="KW-0004">4Fe-4S</keyword>
<keyword id="KW-0028">Amino-acid biosynthesis</keyword>
<keyword id="KW-0100">Branched-chain amino acid biosynthesis</keyword>
<keyword id="KW-0408">Iron</keyword>
<keyword id="KW-0411">Iron-sulfur</keyword>
<keyword id="KW-0432">Leucine biosynthesis</keyword>
<keyword id="KW-0456">Lyase</keyword>
<keyword id="KW-0479">Metal-binding</keyword>
<evidence type="ECO:0000255" key="1">
    <source>
        <dbReference type="HAMAP-Rule" id="MF_01026"/>
    </source>
</evidence>
<reference key="1">
    <citation type="journal article" date="2005" name="Nucleic Acids Res.">
        <title>The genome sequence of Salmonella enterica serovar Choleraesuis, a highly invasive and resistant zoonotic pathogen.</title>
        <authorList>
            <person name="Chiu C.-H."/>
            <person name="Tang P."/>
            <person name="Chu C."/>
            <person name="Hu S."/>
            <person name="Bao Q."/>
            <person name="Yu J."/>
            <person name="Chou Y.-Y."/>
            <person name="Wang H.-S."/>
            <person name="Lee Y.-S."/>
        </authorList>
    </citation>
    <scope>NUCLEOTIDE SEQUENCE [LARGE SCALE GENOMIC DNA]</scope>
    <source>
        <strain>SC-B67</strain>
    </source>
</reference>
<organism>
    <name type="scientific">Salmonella choleraesuis (strain SC-B67)</name>
    <dbReference type="NCBI Taxonomy" id="321314"/>
    <lineage>
        <taxon>Bacteria</taxon>
        <taxon>Pseudomonadati</taxon>
        <taxon>Pseudomonadota</taxon>
        <taxon>Gammaproteobacteria</taxon>
        <taxon>Enterobacterales</taxon>
        <taxon>Enterobacteriaceae</taxon>
        <taxon>Salmonella</taxon>
    </lineage>
</organism>